<proteinExistence type="inferred from homology"/>
<gene>
    <name evidence="1" type="primary">rpsK</name>
    <name type="ordered locus">ACL_0113</name>
</gene>
<reference key="1">
    <citation type="journal article" date="2011" name="J. Bacteriol.">
        <title>Complete genome and proteome of Acholeplasma laidlawii.</title>
        <authorList>
            <person name="Lazarev V.N."/>
            <person name="Levitskii S.A."/>
            <person name="Basovskii Y.I."/>
            <person name="Chukin M.M."/>
            <person name="Akopian T.A."/>
            <person name="Vereshchagin V.V."/>
            <person name="Kostrjukova E.S."/>
            <person name="Kovaleva G.Y."/>
            <person name="Kazanov M.D."/>
            <person name="Malko D.B."/>
            <person name="Vitreschak A.G."/>
            <person name="Sernova N.V."/>
            <person name="Gelfand M.S."/>
            <person name="Demina I.A."/>
            <person name="Serebryakova M.V."/>
            <person name="Galyamina M.A."/>
            <person name="Vtyurin N.N."/>
            <person name="Rogov S.I."/>
            <person name="Alexeev D.G."/>
            <person name="Ladygina V.G."/>
            <person name="Govorun V.M."/>
        </authorList>
    </citation>
    <scope>NUCLEOTIDE SEQUENCE [LARGE SCALE GENOMIC DNA]</scope>
    <source>
        <strain>PG-8A</strain>
    </source>
</reference>
<feature type="chain" id="PRO_1000086175" description="Small ribosomal subunit protein uS11">
    <location>
        <begin position="1"/>
        <end position="130"/>
    </location>
</feature>
<evidence type="ECO:0000255" key="1">
    <source>
        <dbReference type="HAMAP-Rule" id="MF_01310"/>
    </source>
</evidence>
<evidence type="ECO:0000305" key="2"/>
<sequence length="130" mass="13708">MAAQKRKTTKRRVRKNIPSGIAHIHTTFNNTIVTITDPAGNAISWSSAGALGIKGSRKSTPFAAQLTSEAAAKGAMDNGMARVEVYVKGPGPGREAAIRSLQAAGLEITAIKDVTPVPHNGCRPPKRPRN</sequence>
<name>RS11_ACHLI</name>
<protein>
    <recommendedName>
        <fullName evidence="1">Small ribosomal subunit protein uS11</fullName>
    </recommendedName>
    <alternativeName>
        <fullName evidence="2">30S ribosomal protein S11</fullName>
    </alternativeName>
</protein>
<dbReference type="EMBL" id="CP000896">
    <property type="protein sequence ID" value="ABX80739.1"/>
    <property type="molecule type" value="Genomic_DNA"/>
</dbReference>
<dbReference type="RefSeq" id="WP_012242070.1">
    <property type="nucleotide sequence ID" value="NC_010163.1"/>
</dbReference>
<dbReference type="SMR" id="A9NEF9"/>
<dbReference type="STRING" id="441768.ACL_0113"/>
<dbReference type="GeneID" id="41338315"/>
<dbReference type="KEGG" id="acl:ACL_0113"/>
<dbReference type="eggNOG" id="COG0100">
    <property type="taxonomic scope" value="Bacteria"/>
</dbReference>
<dbReference type="HOGENOM" id="CLU_072439_5_0_14"/>
<dbReference type="OrthoDB" id="9806415at2"/>
<dbReference type="Proteomes" id="UP000008558">
    <property type="component" value="Chromosome"/>
</dbReference>
<dbReference type="GO" id="GO:1990904">
    <property type="term" value="C:ribonucleoprotein complex"/>
    <property type="evidence" value="ECO:0007669"/>
    <property type="project" value="UniProtKB-KW"/>
</dbReference>
<dbReference type="GO" id="GO:0005840">
    <property type="term" value="C:ribosome"/>
    <property type="evidence" value="ECO:0007669"/>
    <property type="project" value="UniProtKB-KW"/>
</dbReference>
<dbReference type="GO" id="GO:0019843">
    <property type="term" value="F:rRNA binding"/>
    <property type="evidence" value="ECO:0007669"/>
    <property type="project" value="UniProtKB-UniRule"/>
</dbReference>
<dbReference type="GO" id="GO:0003735">
    <property type="term" value="F:structural constituent of ribosome"/>
    <property type="evidence" value="ECO:0007669"/>
    <property type="project" value="InterPro"/>
</dbReference>
<dbReference type="GO" id="GO:0006412">
    <property type="term" value="P:translation"/>
    <property type="evidence" value="ECO:0007669"/>
    <property type="project" value="UniProtKB-UniRule"/>
</dbReference>
<dbReference type="FunFam" id="3.30.420.80:FF:000001">
    <property type="entry name" value="30S ribosomal protein S11"/>
    <property type="match status" value="1"/>
</dbReference>
<dbReference type="Gene3D" id="3.30.420.80">
    <property type="entry name" value="Ribosomal protein S11"/>
    <property type="match status" value="1"/>
</dbReference>
<dbReference type="HAMAP" id="MF_01310">
    <property type="entry name" value="Ribosomal_uS11"/>
    <property type="match status" value="1"/>
</dbReference>
<dbReference type="InterPro" id="IPR001971">
    <property type="entry name" value="Ribosomal_uS11"/>
</dbReference>
<dbReference type="InterPro" id="IPR019981">
    <property type="entry name" value="Ribosomal_uS11_bac-type"/>
</dbReference>
<dbReference type="InterPro" id="IPR018102">
    <property type="entry name" value="Ribosomal_uS11_CS"/>
</dbReference>
<dbReference type="InterPro" id="IPR036967">
    <property type="entry name" value="Ribosomal_uS11_sf"/>
</dbReference>
<dbReference type="NCBIfam" id="NF003698">
    <property type="entry name" value="PRK05309.1"/>
    <property type="match status" value="1"/>
</dbReference>
<dbReference type="NCBIfam" id="TIGR03632">
    <property type="entry name" value="uS11_bact"/>
    <property type="match status" value="1"/>
</dbReference>
<dbReference type="PANTHER" id="PTHR11759">
    <property type="entry name" value="40S RIBOSOMAL PROTEIN S14/30S RIBOSOMAL PROTEIN S11"/>
    <property type="match status" value="1"/>
</dbReference>
<dbReference type="Pfam" id="PF00411">
    <property type="entry name" value="Ribosomal_S11"/>
    <property type="match status" value="1"/>
</dbReference>
<dbReference type="PIRSF" id="PIRSF002131">
    <property type="entry name" value="Ribosomal_S11"/>
    <property type="match status" value="1"/>
</dbReference>
<dbReference type="SUPFAM" id="SSF53137">
    <property type="entry name" value="Translational machinery components"/>
    <property type="match status" value="1"/>
</dbReference>
<dbReference type="PROSITE" id="PS00054">
    <property type="entry name" value="RIBOSOMAL_S11"/>
    <property type="match status" value="1"/>
</dbReference>
<comment type="function">
    <text evidence="1">Located on the platform of the 30S subunit, it bridges several disparate RNA helices of the 16S rRNA. Forms part of the Shine-Dalgarno cleft in the 70S ribosome.</text>
</comment>
<comment type="subunit">
    <text evidence="1">Part of the 30S ribosomal subunit. Interacts with proteins S7 and S18. Binds to IF-3.</text>
</comment>
<comment type="similarity">
    <text evidence="1">Belongs to the universal ribosomal protein uS11 family.</text>
</comment>
<organism>
    <name type="scientific">Acholeplasma laidlawii (strain PG-8A)</name>
    <dbReference type="NCBI Taxonomy" id="441768"/>
    <lineage>
        <taxon>Bacteria</taxon>
        <taxon>Bacillati</taxon>
        <taxon>Mycoplasmatota</taxon>
        <taxon>Mollicutes</taxon>
        <taxon>Acholeplasmatales</taxon>
        <taxon>Acholeplasmataceae</taxon>
        <taxon>Acholeplasma</taxon>
    </lineage>
</organism>
<keyword id="KW-1185">Reference proteome</keyword>
<keyword id="KW-0687">Ribonucleoprotein</keyword>
<keyword id="KW-0689">Ribosomal protein</keyword>
<keyword id="KW-0694">RNA-binding</keyword>
<keyword id="KW-0699">rRNA-binding</keyword>
<accession>A9NEF9</accession>